<protein>
    <recommendedName>
        <fullName evidence="1">Small ribosomal subunit protein uS2</fullName>
    </recommendedName>
    <alternativeName>
        <fullName evidence="2">30S ribosomal protein S2</fullName>
    </alternativeName>
</protein>
<proteinExistence type="inferred from homology"/>
<sequence length="231" mass="25973">MKKLSMREMLQAGVHFGHQTRYWNPKMKPFIFGIRNKIHIINLDKTIVMFSNALVELKKIALAKGKILFVGTKRATRESIKSTALICGQFFVNYRWLGGMLTNWKTVRQSIKRLKDLENQSQDGTFDKLTKKEVLILNRELISLENSLGGIKNMGGLPDALFTAGAEQEHIAIKEANSLGIPVFSIVDTNSDPDGIDFIIPGNDDAIRAINLYLNIVSNVICSDELNKETH</sequence>
<feature type="chain" id="PRO_0000134148" description="Small ribosomal subunit protein uS2">
    <location>
        <begin position="1"/>
        <end position="231"/>
    </location>
</feature>
<keyword id="KW-1185">Reference proteome</keyword>
<keyword id="KW-0687">Ribonucleoprotein</keyword>
<keyword id="KW-0689">Ribosomal protein</keyword>
<name>RS2_BLOFL</name>
<reference key="1">
    <citation type="journal article" date="2003" name="Proc. Natl. Acad. Sci. U.S.A.">
        <title>The genome sequence of Blochmannia floridanus: comparative analysis of reduced genomes.</title>
        <authorList>
            <person name="Gil R."/>
            <person name="Silva F.J."/>
            <person name="Zientz E."/>
            <person name="Delmotte F."/>
            <person name="Gonzalez-Candelas F."/>
            <person name="Latorre A."/>
            <person name="Rausell C."/>
            <person name="Kamerbeek J."/>
            <person name="Gadau J."/>
            <person name="Hoelldobler B."/>
            <person name="van Ham R.C.H.J."/>
            <person name="Gross R."/>
            <person name="Moya A."/>
        </authorList>
    </citation>
    <scope>NUCLEOTIDE SEQUENCE [LARGE SCALE GENOMIC DNA]</scope>
</reference>
<evidence type="ECO:0000255" key="1">
    <source>
        <dbReference type="HAMAP-Rule" id="MF_00291"/>
    </source>
</evidence>
<evidence type="ECO:0000305" key="2"/>
<dbReference type="EMBL" id="BX248583">
    <property type="protein sequence ID" value="CAD83342.1"/>
    <property type="molecule type" value="Genomic_DNA"/>
</dbReference>
<dbReference type="SMR" id="Q7VRE6"/>
<dbReference type="STRING" id="203907.Bfl271"/>
<dbReference type="KEGG" id="bfl:Bfl271"/>
<dbReference type="eggNOG" id="COG0052">
    <property type="taxonomic scope" value="Bacteria"/>
</dbReference>
<dbReference type="HOGENOM" id="CLU_040318_1_0_6"/>
<dbReference type="OrthoDB" id="9808036at2"/>
<dbReference type="Proteomes" id="UP000002192">
    <property type="component" value="Chromosome"/>
</dbReference>
<dbReference type="GO" id="GO:0022627">
    <property type="term" value="C:cytosolic small ribosomal subunit"/>
    <property type="evidence" value="ECO:0007669"/>
    <property type="project" value="TreeGrafter"/>
</dbReference>
<dbReference type="GO" id="GO:0003735">
    <property type="term" value="F:structural constituent of ribosome"/>
    <property type="evidence" value="ECO:0007669"/>
    <property type="project" value="InterPro"/>
</dbReference>
<dbReference type="GO" id="GO:0006412">
    <property type="term" value="P:translation"/>
    <property type="evidence" value="ECO:0007669"/>
    <property type="project" value="UniProtKB-UniRule"/>
</dbReference>
<dbReference type="CDD" id="cd01425">
    <property type="entry name" value="RPS2"/>
    <property type="match status" value="1"/>
</dbReference>
<dbReference type="FunFam" id="1.10.287.610:FF:000001">
    <property type="entry name" value="30S ribosomal protein S2"/>
    <property type="match status" value="1"/>
</dbReference>
<dbReference type="Gene3D" id="3.40.50.10490">
    <property type="entry name" value="Glucose-6-phosphate isomerase like protein, domain 1"/>
    <property type="match status" value="1"/>
</dbReference>
<dbReference type="Gene3D" id="1.10.287.610">
    <property type="entry name" value="Helix hairpin bin"/>
    <property type="match status" value="1"/>
</dbReference>
<dbReference type="HAMAP" id="MF_00291_B">
    <property type="entry name" value="Ribosomal_uS2_B"/>
    <property type="match status" value="1"/>
</dbReference>
<dbReference type="InterPro" id="IPR001865">
    <property type="entry name" value="Ribosomal_uS2"/>
</dbReference>
<dbReference type="InterPro" id="IPR005706">
    <property type="entry name" value="Ribosomal_uS2_bac/mit/plastid"/>
</dbReference>
<dbReference type="InterPro" id="IPR018130">
    <property type="entry name" value="Ribosomal_uS2_CS"/>
</dbReference>
<dbReference type="InterPro" id="IPR023591">
    <property type="entry name" value="Ribosomal_uS2_flav_dom_sf"/>
</dbReference>
<dbReference type="NCBIfam" id="TIGR01011">
    <property type="entry name" value="rpsB_bact"/>
    <property type="match status" value="1"/>
</dbReference>
<dbReference type="PANTHER" id="PTHR12534">
    <property type="entry name" value="30S RIBOSOMAL PROTEIN S2 PROKARYOTIC AND ORGANELLAR"/>
    <property type="match status" value="1"/>
</dbReference>
<dbReference type="PANTHER" id="PTHR12534:SF0">
    <property type="entry name" value="SMALL RIBOSOMAL SUBUNIT PROTEIN US2M"/>
    <property type="match status" value="1"/>
</dbReference>
<dbReference type="Pfam" id="PF00318">
    <property type="entry name" value="Ribosomal_S2"/>
    <property type="match status" value="1"/>
</dbReference>
<dbReference type="PRINTS" id="PR00395">
    <property type="entry name" value="RIBOSOMALS2"/>
</dbReference>
<dbReference type="SUPFAM" id="SSF52313">
    <property type="entry name" value="Ribosomal protein S2"/>
    <property type="match status" value="1"/>
</dbReference>
<dbReference type="PROSITE" id="PS00962">
    <property type="entry name" value="RIBOSOMAL_S2_1"/>
    <property type="match status" value="1"/>
</dbReference>
<accession>Q7VRE6</accession>
<comment type="similarity">
    <text evidence="1">Belongs to the universal ribosomal protein uS2 family.</text>
</comment>
<organism>
    <name type="scientific">Blochmanniella floridana</name>
    <dbReference type="NCBI Taxonomy" id="203907"/>
    <lineage>
        <taxon>Bacteria</taxon>
        <taxon>Pseudomonadati</taxon>
        <taxon>Pseudomonadota</taxon>
        <taxon>Gammaproteobacteria</taxon>
        <taxon>Enterobacterales</taxon>
        <taxon>Enterobacteriaceae</taxon>
        <taxon>ant endosymbionts</taxon>
        <taxon>Candidatus Blochmanniella</taxon>
    </lineage>
</organism>
<gene>
    <name evidence="1" type="primary">rpsB</name>
    <name type="ordered locus">Bfl271</name>
</gene>